<name>CCD77_MOUSE</name>
<organism>
    <name type="scientific">Mus musculus</name>
    <name type="common">Mouse</name>
    <dbReference type="NCBI Taxonomy" id="10090"/>
    <lineage>
        <taxon>Eukaryota</taxon>
        <taxon>Metazoa</taxon>
        <taxon>Chordata</taxon>
        <taxon>Craniata</taxon>
        <taxon>Vertebrata</taxon>
        <taxon>Euteleostomi</taxon>
        <taxon>Mammalia</taxon>
        <taxon>Eutheria</taxon>
        <taxon>Euarchontoglires</taxon>
        <taxon>Glires</taxon>
        <taxon>Rodentia</taxon>
        <taxon>Myomorpha</taxon>
        <taxon>Muroidea</taxon>
        <taxon>Muridae</taxon>
        <taxon>Murinae</taxon>
        <taxon>Mus</taxon>
        <taxon>Mus</taxon>
    </lineage>
</organism>
<proteinExistence type="evidence at protein level"/>
<reference key="1">
    <citation type="journal article" date="2005" name="Science">
        <title>The transcriptional landscape of the mammalian genome.</title>
        <authorList>
            <person name="Carninci P."/>
            <person name="Kasukawa T."/>
            <person name="Katayama S."/>
            <person name="Gough J."/>
            <person name="Frith M.C."/>
            <person name="Maeda N."/>
            <person name="Oyama R."/>
            <person name="Ravasi T."/>
            <person name="Lenhard B."/>
            <person name="Wells C."/>
            <person name="Kodzius R."/>
            <person name="Shimokawa K."/>
            <person name="Bajic V.B."/>
            <person name="Brenner S.E."/>
            <person name="Batalov S."/>
            <person name="Forrest A.R."/>
            <person name="Zavolan M."/>
            <person name="Davis M.J."/>
            <person name="Wilming L.G."/>
            <person name="Aidinis V."/>
            <person name="Allen J.E."/>
            <person name="Ambesi-Impiombato A."/>
            <person name="Apweiler R."/>
            <person name="Aturaliya R.N."/>
            <person name="Bailey T.L."/>
            <person name="Bansal M."/>
            <person name="Baxter L."/>
            <person name="Beisel K.W."/>
            <person name="Bersano T."/>
            <person name="Bono H."/>
            <person name="Chalk A.M."/>
            <person name="Chiu K.P."/>
            <person name="Choudhary V."/>
            <person name="Christoffels A."/>
            <person name="Clutterbuck D.R."/>
            <person name="Crowe M.L."/>
            <person name="Dalla E."/>
            <person name="Dalrymple B.P."/>
            <person name="de Bono B."/>
            <person name="Della Gatta G."/>
            <person name="di Bernardo D."/>
            <person name="Down T."/>
            <person name="Engstrom P."/>
            <person name="Fagiolini M."/>
            <person name="Faulkner G."/>
            <person name="Fletcher C.F."/>
            <person name="Fukushima T."/>
            <person name="Furuno M."/>
            <person name="Futaki S."/>
            <person name="Gariboldi M."/>
            <person name="Georgii-Hemming P."/>
            <person name="Gingeras T.R."/>
            <person name="Gojobori T."/>
            <person name="Green R.E."/>
            <person name="Gustincich S."/>
            <person name="Harbers M."/>
            <person name="Hayashi Y."/>
            <person name="Hensch T.K."/>
            <person name="Hirokawa N."/>
            <person name="Hill D."/>
            <person name="Huminiecki L."/>
            <person name="Iacono M."/>
            <person name="Ikeo K."/>
            <person name="Iwama A."/>
            <person name="Ishikawa T."/>
            <person name="Jakt M."/>
            <person name="Kanapin A."/>
            <person name="Katoh M."/>
            <person name="Kawasawa Y."/>
            <person name="Kelso J."/>
            <person name="Kitamura H."/>
            <person name="Kitano H."/>
            <person name="Kollias G."/>
            <person name="Krishnan S.P."/>
            <person name="Kruger A."/>
            <person name="Kummerfeld S.K."/>
            <person name="Kurochkin I.V."/>
            <person name="Lareau L.F."/>
            <person name="Lazarevic D."/>
            <person name="Lipovich L."/>
            <person name="Liu J."/>
            <person name="Liuni S."/>
            <person name="McWilliam S."/>
            <person name="Madan Babu M."/>
            <person name="Madera M."/>
            <person name="Marchionni L."/>
            <person name="Matsuda H."/>
            <person name="Matsuzawa S."/>
            <person name="Miki H."/>
            <person name="Mignone F."/>
            <person name="Miyake S."/>
            <person name="Morris K."/>
            <person name="Mottagui-Tabar S."/>
            <person name="Mulder N."/>
            <person name="Nakano N."/>
            <person name="Nakauchi H."/>
            <person name="Ng P."/>
            <person name="Nilsson R."/>
            <person name="Nishiguchi S."/>
            <person name="Nishikawa S."/>
            <person name="Nori F."/>
            <person name="Ohara O."/>
            <person name="Okazaki Y."/>
            <person name="Orlando V."/>
            <person name="Pang K.C."/>
            <person name="Pavan W.J."/>
            <person name="Pavesi G."/>
            <person name="Pesole G."/>
            <person name="Petrovsky N."/>
            <person name="Piazza S."/>
            <person name="Reed J."/>
            <person name="Reid J.F."/>
            <person name="Ring B.Z."/>
            <person name="Ringwald M."/>
            <person name="Rost B."/>
            <person name="Ruan Y."/>
            <person name="Salzberg S.L."/>
            <person name="Sandelin A."/>
            <person name="Schneider C."/>
            <person name="Schoenbach C."/>
            <person name="Sekiguchi K."/>
            <person name="Semple C.A."/>
            <person name="Seno S."/>
            <person name="Sessa L."/>
            <person name="Sheng Y."/>
            <person name="Shibata Y."/>
            <person name="Shimada H."/>
            <person name="Shimada K."/>
            <person name="Silva D."/>
            <person name="Sinclair B."/>
            <person name="Sperling S."/>
            <person name="Stupka E."/>
            <person name="Sugiura K."/>
            <person name="Sultana R."/>
            <person name="Takenaka Y."/>
            <person name="Taki K."/>
            <person name="Tammoja K."/>
            <person name="Tan S.L."/>
            <person name="Tang S."/>
            <person name="Taylor M.S."/>
            <person name="Tegner J."/>
            <person name="Teichmann S.A."/>
            <person name="Ueda H.R."/>
            <person name="van Nimwegen E."/>
            <person name="Verardo R."/>
            <person name="Wei C.L."/>
            <person name="Yagi K."/>
            <person name="Yamanishi H."/>
            <person name="Zabarovsky E."/>
            <person name="Zhu S."/>
            <person name="Zimmer A."/>
            <person name="Hide W."/>
            <person name="Bult C."/>
            <person name="Grimmond S.M."/>
            <person name="Teasdale R.D."/>
            <person name="Liu E.T."/>
            <person name="Brusic V."/>
            <person name="Quackenbush J."/>
            <person name="Wahlestedt C."/>
            <person name="Mattick J.S."/>
            <person name="Hume D.A."/>
            <person name="Kai C."/>
            <person name="Sasaki D."/>
            <person name="Tomaru Y."/>
            <person name="Fukuda S."/>
            <person name="Kanamori-Katayama M."/>
            <person name="Suzuki M."/>
            <person name="Aoki J."/>
            <person name="Arakawa T."/>
            <person name="Iida J."/>
            <person name="Imamura K."/>
            <person name="Itoh M."/>
            <person name="Kato T."/>
            <person name="Kawaji H."/>
            <person name="Kawagashira N."/>
            <person name="Kawashima T."/>
            <person name="Kojima M."/>
            <person name="Kondo S."/>
            <person name="Konno H."/>
            <person name="Nakano K."/>
            <person name="Ninomiya N."/>
            <person name="Nishio T."/>
            <person name="Okada M."/>
            <person name="Plessy C."/>
            <person name="Shibata K."/>
            <person name="Shiraki T."/>
            <person name="Suzuki S."/>
            <person name="Tagami M."/>
            <person name="Waki K."/>
            <person name="Watahiki A."/>
            <person name="Okamura-Oho Y."/>
            <person name="Suzuki H."/>
            <person name="Kawai J."/>
            <person name="Hayashizaki Y."/>
        </authorList>
    </citation>
    <scope>NUCLEOTIDE SEQUENCE [LARGE SCALE MRNA] (ISOFORM 1)</scope>
    <source>
        <strain>C57BL/6J</strain>
    </source>
</reference>
<reference key="2">
    <citation type="journal article" date="2004" name="Genome Res.">
        <title>The status, quality, and expansion of the NIH full-length cDNA project: the Mammalian Gene Collection (MGC).</title>
        <authorList>
            <consortium name="The MGC Project Team"/>
        </authorList>
    </citation>
    <scope>NUCLEOTIDE SEQUENCE [LARGE SCALE MRNA] (ISOFORM 2)</scope>
    <source>
        <strain>Czech II</strain>
        <tissue>Mammary gland</tissue>
    </source>
</reference>
<reference key="3">
    <citation type="journal article" date="2010" name="Cell">
        <title>A tissue-specific atlas of mouse protein phosphorylation and expression.</title>
        <authorList>
            <person name="Huttlin E.L."/>
            <person name="Jedrychowski M.P."/>
            <person name="Elias J.E."/>
            <person name="Goswami T."/>
            <person name="Rad R."/>
            <person name="Beausoleil S.A."/>
            <person name="Villen J."/>
            <person name="Haas W."/>
            <person name="Sowa M.E."/>
            <person name="Gygi S.P."/>
        </authorList>
    </citation>
    <scope>PHOSPHORYLATION [LARGE SCALE ANALYSIS] AT SER-38</scope>
    <scope>IDENTIFICATION BY MASS SPECTROMETRY [LARGE SCALE ANALYSIS]</scope>
    <source>
        <tissue>Testis</tissue>
    </source>
</reference>
<keyword id="KW-0025">Alternative splicing</keyword>
<keyword id="KW-0175">Coiled coil</keyword>
<keyword id="KW-0597">Phosphoprotein</keyword>
<keyword id="KW-1185">Reference proteome</keyword>
<gene>
    <name type="primary">Ccdc77</name>
</gene>
<evidence type="ECO:0000255" key="1"/>
<evidence type="ECO:0000303" key="2">
    <source>
    </source>
</evidence>
<evidence type="ECO:0000305" key="3"/>
<evidence type="ECO:0007744" key="4">
    <source>
    </source>
</evidence>
<sequence length="489" mass="57569">MNFTPTRTPICRKISFASKRGAGSGFGDTNRWKKMADSMESTPLPSVEDRLAVLCPSQELLEYYQKKMANCESENEDLLKKLELYREACEEQHKLEWNLQQREEEIAELQKALSDMQVCLFQEREHVLRLYSENDRLRIRELEDKKKIQNLLALVGPDAGEVTYFHKEPPHRVSILQKTLQAAVACEPSASKADPGVSKRQVRIKDKEGISERHQRDTEMLLLQVEALQAQLGEQTKLSREQVEGLMEDRRIRVEEIQVQHQRNQEKIMELTKSLHHTQELLYESTKDFLQLKFENQNKEKVWMLEKDHLMSKITQYRAQCKKKEDKLGKVVPILHESHHTQNEYIKSLKDKLIQEKKLSNMYQEQCISLEEELARIREEEGVRREIFKDRSNKMGKRLQIMTKRYQALEHRRALEVEGFKTDIKSLRQKLRDLEQMLYKATMNNTHGDQDLAMLCEVRDSNRRAHKIQGELKNLKSKVFGLENALRLC</sequence>
<comment type="alternative products">
    <event type="alternative splicing"/>
    <isoform>
        <id>Q9CZH8-1</id>
        <name>1</name>
        <sequence type="displayed"/>
    </isoform>
    <isoform>
        <id>Q9CZH8-2</id>
        <name>2</name>
        <sequence type="described" ref="VSP_022264"/>
    </isoform>
</comment>
<feature type="chain" id="PRO_0000271004" description="Coiled-coil domain-containing protein 77">
    <location>
        <begin position="1"/>
        <end position="489"/>
    </location>
</feature>
<feature type="coiled-coil region" evidence="1">
    <location>
        <begin position="57"/>
        <end position="120"/>
    </location>
</feature>
<feature type="coiled-coil region" evidence="1">
    <location>
        <begin position="212"/>
        <end position="487"/>
    </location>
</feature>
<feature type="modified residue" description="Phosphoserine" evidence="4">
    <location>
        <position position="38"/>
    </location>
</feature>
<feature type="splice variant" id="VSP_022264" description="In isoform 2." evidence="2">
    <location>
        <begin position="14"/>
        <end position="31"/>
    </location>
</feature>
<feature type="sequence conflict" description="In Ref. 2; AAH18387." evidence="3" ref="2">
    <original>R</original>
    <variation>K</variation>
    <location>
        <position position="172"/>
    </location>
</feature>
<feature type="sequence conflict" description="In Ref. 2; AAH18387." evidence="3" ref="2">
    <original>M</original>
    <variation>R</variation>
    <location>
        <position position="269"/>
    </location>
</feature>
<feature type="sequence conflict" description="In Ref. 2; AAH18387." evidence="3" ref="2">
    <original>T</original>
    <variation>A</variation>
    <location>
        <position position="341"/>
    </location>
</feature>
<feature type="sequence conflict" description="In Ref. 2; AAH18387." evidence="3" ref="2">
    <original>K</original>
    <variation>R</variation>
    <location>
        <position position="358"/>
    </location>
</feature>
<dbReference type="EMBL" id="AK012598">
    <property type="protein sequence ID" value="BAB28344.1"/>
    <property type="molecule type" value="mRNA"/>
</dbReference>
<dbReference type="EMBL" id="BC018387">
    <property type="protein sequence ID" value="AAH18387.1"/>
    <property type="molecule type" value="mRNA"/>
</dbReference>
<dbReference type="CCDS" id="CCDS20481.1">
    <molecule id="Q9CZH8-1"/>
</dbReference>
<dbReference type="RefSeq" id="NP_001368863.1">
    <molecule id="Q9CZH8-1"/>
    <property type="nucleotide sequence ID" value="NM_001381934.1"/>
</dbReference>
<dbReference type="RefSeq" id="NP_001368864.1">
    <molecule id="Q9CZH8-2"/>
    <property type="nucleotide sequence ID" value="NM_001381935.1"/>
</dbReference>
<dbReference type="RefSeq" id="NP_001368865.1">
    <molecule id="Q9CZH8-2"/>
    <property type="nucleotide sequence ID" value="NM_001381936.1"/>
</dbReference>
<dbReference type="RefSeq" id="NP_080304.1">
    <molecule id="Q9CZH8-1"/>
    <property type="nucleotide sequence ID" value="NM_026028.5"/>
</dbReference>
<dbReference type="RefSeq" id="XP_006506553.1">
    <molecule id="Q9CZH8-1"/>
    <property type="nucleotide sequence ID" value="XM_006506490.4"/>
</dbReference>
<dbReference type="RefSeq" id="XP_006506554.1">
    <molecule id="Q9CZH8-1"/>
    <property type="nucleotide sequence ID" value="XM_006506491.5"/>
</dbReference>
<dbReference type="RefSeq" id="XP_006506555.1">
    <property type="nucleotide sequence ID" value="XM_006506492.2"/>
</dbReference>
<dbReference type="RefSeq" id="XP_006506556.1">
    <property type="nucleotide sequence ID" value="XM_006506493.3"/>
</dbReference>
<dbReference type="RefSeq" id="XP_006506557.1">
    <molecule id="Q9CZH8-2"/>
    <property type="nucleotide sequence ID" value="XM_006506494.4"/>
</dbReference>
<dbReference type="RefSeq" id="XP_006506558.1">
    <molecule id="Q9CZH8-2"/>
    <property type="nucleotide sequence ID" value="XM_006506495.3"/>
</dbReference>
<dbReference type="RefSeq" id="XP_006506559.1">
    <property type="nucleotide sequence ID" value="XM_006506496.1"/>
</dbReference>
<dbReference type="RefSeq" id="XP_011239734.1">
    <molecule id="Q9CZH8-1"/>
    <property type="nucleotide sequence ID" value="XM_011241432.4"/>
</dbReference>
<dbReference type="RefSeq" id="XP_011239735.1">
    <molecule id="Q9CZH8-2"/>
    <property type="nucleotide sequence ID" value="XM_011241433.4"/>
</dbReference>
<dbReference type="SMR" id="Q9CZH8"/>
<dbReference type="BioGRID" id="212011">
    <property type="interactions" value="18"/>
</dbReference>
<dbReference type="FunCoup" id="Q9CZH8">
    <property type="interactions" value="634"/>
</dbReference>
<dbReference type="IntAct" id="Q9CZH8">
    <property type="interactions" value="18"/>
</dbReference>
<dbReference type="STRING" id="10090.ENSMUSP00000032283"/>
<dbReference type="iPTMnet" id="Q9CZH8"/>
<dbReference type="PhosphoSitePlus" id="Q9CZH8"/>
<dbReference type="PaxDb" id="10090-ENSMUSP00000032283"/>
<dbReference type="PeptideAtlas" id="Q9CZH8"/>
<dbReference type="ProteomicsDB" id="265597">
    <molecule id="Q9CZH8-1"/>
</dbReference>
<dbReference type="ProteomicsDB" id="265598">
    <molecule id="Q9CZH8-2"/>
</dbReference>
<dbReference type="Pumba" id="Q9CZH8"/>
<dbReference type="Antibodypedia" id="50661">
    <property type="antibodies" value="13 antibodies from 10 providers"/>
</dbReference>
<dbReference type="DNASU" id="67200"/>
<dbReference type="Ensembl" id="ENSMUST00000032283.12">
    <molecule id="Q9CZH8-1"/>
    <property type="protein sequence ID" value="ENSMUSP00000032283.6"/>
    <property type="gene ID" value="ENSMUSG00000030177.15"/>
</dbReference>
<dbReference type="Ensembl" id="ENSMUST00000112703.8">
    <molecule id="Q9CZH8-2"/>
    <property type="protein sequence ID" value="ENSMUSP00000108323.2"/>
    <property type="gene ID" value="ENSMUSG00000030177.15"/>
</dbReference>
<dbReference type="GeneID" id="67200"/>
<dbReference type="KEGG" id="mmu:67200"/>
<dbReference type="UCSC" id="uc009dmz.2">
    <molecule id="Q9CZH8-1"/>
    <property type="organism name" value="mouse"/>
</dbReference>
<dbReference type="UCSC" id="uc009dna.2">
    <molecule id="Q9CZH8-2"/>
    <property type="organism name" value="mouse"/>
</dbReference>
<dbReference type="AGR" id="MGI:1914450"/>
<dbReference type="CTD" id="84318"/>
<dbReference type="MGI" id="MGI:1914450">
    <property type="gene designation" value="Ccdc77"/>
</dbReference>
<dbReference type="VEuPathDB" id="HostDB:ENSMUSG00000030177"/>
<dbReference type="eggNOG" id="ENOG502QT8A">
    <property type="taxonomic scope" value="Eukaryota"/>
</dbReference>
<dbReference type="GeneTree" id="ENSGT00390000010251"/>
<dbReference type="HOGENOM" id="CLU_035281_0_0_1"/>
<dbReference type="InParanoid" id="Q9CZH8"/>
<dbReference type="OMA" id="HLSHMYR"/>
<dbReference type="OrthoDB" id="191169at2759"/>
<dbReference type="PhylomeDB" id="Q9CZH8"/>
<dbReference type="TreeFam" id="TF329022"/>
<dbReference type="BioGRID-ORCS" id="67200">
    <property type="hits" value="6 hits in 76 CRISPR screens"/>
</dbReference>
<dbReference type="ChiTaRS" id="Ccdc77">
    <property type="organism name" value="mouse"/>
</dbReference>
<dbReference type="PRO" id="PR:Q9CZH8"/>
<dbReference type="Proteomes" id="UP000000589">
    <property type="component" value="Chromosome 6"/>
</dbReference>
<dbReference type="RNAct" id="Q9CZH8">
    <property type="molecule type" value="protein"/>
</dbReference>
<dbReference type="Bgee" id="ENSMUSG00000030177">
    <property type="expression patterns" value="Expressed in spermatocyte and 193 other cell types or tissues"/>
</dbReference>
<dbReference type="ExpressionAtlas" id="Q9CZH8">
    <property type="expression patterns" value="baseline and differential"/>
</dbReference>
<dbReference type="GO" id="GO:0005813">
    <property type="term" value="C:centrosome"/>
    <property type="evidence" value="ECO:0007669"/>
    <property type="project" value="Ensembl"/>
</dbReference>
<dbReference type="InterPro" id="IPR037696">
    <property type="entry name" value="CCDC77"/>
</dbReference>
<dbReference type="PANTHER" id="PTHR22091">
    <property type="entry name" value="COILED-COIL DOMAIN-CONTAINING PROTEIN 77"/>
    <property type="match status" value="1"/>
</dbReference>
<dbReference type="PANTHER" id="PTHR22091:SF1">
    <property type="entry name" value="COILED-COIL DOMAIN-CONTAINING PROTEIN 77"/>
    <property type="match status" value="1"/>
</dbReference>
<accession>Q9CZH8</accession>
<accession>Q8VEJ7</accession>
<protein>
    <recommendedName>
        <fullName>Coiled-coil domain-containing protein 77</fullName>
    </recommendedName>
</protein>